<organism>
    <name type="scientific">Pseudomonas putida (strain W619)</name>
    <dbReference type="NCBI Taxonomy" id="390235"/>
    <lineage>
        <taxon>Bacteria</taxon>
        <taxon>Pseudomonadati</taxon>
        <taxon>Pseudomonadota</taxon>
        <taxon>Gammaproteobacteria</taxon>
        <taxon>Pseudomonadales</taxon>
        <taxon>Pseudomonadaceae</taxon>
        <taxon>Pseudomonas</taxon>
    </lineage>
</organism>
<protein>
    <recommendedName>
        <fullName evidence="1">Urease accessory protein UreE</fullName>
    </recommendedName>
</protein>
<reference key="1">
    <citation type="submission" date="2008-02" db="EMBL/GenBank/DDBJ databases">
        <title>Complete sequence of Pseudomonas putida W619.</title>
        <authorList>
            <person name="Copeland A."/>
            <person name="Lucas S."/>
            <person name="Lapidus A."/>
            <person name="Barry K."/>
            <person name="Detter J.C."/>
            <person name="Glavina del Rio T."/>
            <person name="Dalin E."/>
            <person name="Tice H."/>
            <person name="Pitluck S."/>
            <person name="Chain P."/>
            <person name="Malfatti S."/>
            <person name="Shin M."/>
            <person name="Vergez L."/>
            <person name="Schmutz J."/>
            <person name="Larimer F."/>
            <person name="Land M."/>
            <person name="Hauser L."/>
            <person name="Kyrpides N."/>
            <person name="Kim E."/>
            <person name="Taghavi S."/>
            <person name="Vangronsveld D."/>
            <person name="van der Lelie D."/>
            <person name="Richardson P."/>
        </authorList>
    </citation>
    <scope>NUCLEOTIDE SEQUENCE [LARGE SCALE GENOMIC DNA]</scope>
    <source>
        <strain>W619</strain>
    </source>
</reference>
<accession>B1J816</accession>
<name>UREE_PSEPW</name>
<sequence length="161" mass="17602">MIVLTRRIDESDTITGTVTLDVDSRIKSRLRVTLDDGREAGLMLERGHLLRGGELLADAAGSQVVRVLAAPEAVSTVRCSDPHLLARAAYHLGNRHVPLQIQPGLLRYQHDHVLDDMLRGLGLAVEAEQAPFEPEAGAYQSAPHSHSHAHDHPFVRLPAHS</sequence>
<comment type="function">
    <text evidence="1">Involved in urease metallocenter assembly. Binds nickel. Probably functions as a nickel donor during metallocenter assembly.</text>
</comment>
<comment type="subcellular location">
    <subcellularLocation>
        <location evidence="1">Cytoplasm</location>
    </subcellularLocation>
</comment>
<comment type="similarity">
    <text evidence="1">Belongs to the UreE family.</text>
</comment>
<dbReference type="EMBL" id="CP000949">
    <property type="protein sequence ID" value="ACA72918.1"/>
    <property type="molecule type" value="Genomic_DNA"/>
</dbReference>
<dbReference type="SMR" id="B1J816"/>
<dbReference type="STRING" id="390235.PputW619_2418"/>
<dbReference type="KEGG" id="ppw:PputW619_2418"/>
<dbReference type="eggNOG" id="COG2371">
    <property type="taxonomic scope" value="Bacteria"/>
</dbReference>
<dbReference type="HOGENOM" id="CLU_093757_2_0_6"/>
<dbReference type="OrthoDB" id="5421304at2"/>
<dbReference type="GO" id="GO:0005737">
    <property type="term" value="C:cytoplasm"/>
    <property type="evidence" value="ECO:0007669"/>
    <property type="project" value="UniProtKB-SubCell"/>
</dbReference>
<dbReference type="GO" id="GO:0016151">
    <property type="term" value="F:nickel cation binding"/>
    <property type="evidence" value="ECO:0007669"/>
    <property type="project" value="UniProtKB-UniRule"/>
</dbReference>
<dbReference type="GO" id="GO:0051082">
    <property type="term" value="F:unfolded protein binding"/>
    <property type="evidence" value="ECO:0007669"/>
    <property type="project" value="UniProtKB-UniRule"/>
</dbReference>
<dbReference type="GO" id="GO:0006457">
    <property type="term" value="P:protein folding"/>
    <property type="evidence" value="ECO:0007669"/>
    <property type="project" value="InterPro"/>
</dbReference>
<dbReference type="GO" id="GO:0065003">
    <property type="term" value="P:protein-containing complex assembly"/>
    <property type="evidence" value="ECO:0007669"/>
    <property type="project" value="InterPro"/>
</dbReference>
<dbReference type="GO" id="GO:0019627">
    <property type="term" value="P:urea metabolic process"/>
    <property type="evidence" value="ECO:0007669"/>
    <property type="project" value="InterPro"/>
</dbReference>
<dbReference type="CDD" id="cd00571">
    <property type="entry name" value="UreE"/>
    <property type="match status" value="1"/>
</dbReference>
<dbReference type="Gene3D" id="2.60.260.20">
    <property type="entry name" value="Urease metallochaperone UreE, N-terminal domain"/>
    <property type="match status" value="1"/>
</dbReference>
<dbReference type="Gene3D" id="3.30.70.790">
    <property type="entry name" value="UreE, C-terminal domain"/>
    <property type="match status" value="1"/>
</dbReference>
<dbReference type="HAMAP" id="MF_00822">
    <property type="entry name" value="UreE"/>
    <property type="match status" value="1"/>
</dbReference>
<dbReference type="InterPro" id="IPR012406">
    <property type="entry name" value="UreE"/>
</dbReference>
<dbReference type="InterPro" id="IPR007864">
    <property type="entry name" value="UreE_C_dom"/>
</dbReference>
<dbReference type="InterPro" id="IPR004029">
    <property type="entry name" value="UreE_N"/>
</dbReference>
<dbReference type="InterPro" id="IPR036118">
    <property type="entry name" value="UreE_N_sf"/>
</dbReference>
<dbReference type="NCBIfam" id="NF009751">
    <property type="entry name" value="PRK13261.1-1"/>
    <property type="match status" value="1"/>
</dbReference>
<dbReference type="Pfam" id="PF05194">
    <property type="entry name" value="UreE_C"/>
    <property type="match status" value="1"/>
</dbReference>
<dbReference type="Pfam" id="PF02814">
    <property type="entry name" value="UreE_N"/>
    <property type="match status" value="1"/>
</dbReference>
<dbReference type="PIRSF" id="PIRSF036402">
    <property type="entry name" value="Ureas_acces_UreE"/>
    <property type="match status" value="1"/>
</dbReference>
<dbReference type="SMART" id="SM00988">
    <property type="entry name" value="UreE_N"/>
    <property type="match status" value="1"/>
</dbReference>
<dbReference type="SUPFAM" id="SSF69737">
    <property type="entry name" value="Urease metallochaperone UreE, C-terminal domain"/>
    <property type="match status" value="1"/>
</dbReference>
<dbReference type="SUPFAM" id="SSF69287">
    <property type="entry name" value="Urease metallochaperone UreE, N-terminal domain"/>
    <property type="match status" value="1"/>
</dbReference>
<feature type="chain" id="PRO_1000197447" description="Urease accessory protein UreE">
    <location>
        <begin position="1"/>
        <end position="161"/>
    </location>
</feature>
<feature type="region of interest" description="Disordered" evidence="2">
    <location>
        <begin position="133"/>
        <end position="161"/>
    </location>
</feature>
<gene>
    <name evidence="1" type="primary">ureE</name>
    <name type="ordered locus">PputW619_2418</name>
</gene>
<keyword id="KW-0143">Chaperone</keyword>
<keyword id="KW-0963">Cytoplasm</keyword>
<keyword id="KW-0533">Nickel</keyword>
<proteinExistence type="inferred from homology"/>
<evidence type="ECO:0000255" key="1">
    <source>
        <dbReference type="HAMAP-Rule" id="MF_00822"/>
    </source>
</evidence>
<evidence type="ECO:0000256" key="2">
    <source>
        <dbReference type="SAM" id="MobiDB-lite"/>
    </source>
</evidence>